<reference key="1">
    <citation type="journal article" date="1999" name="Genetics">
        <title>Genetic analysis of hook, a gene required for endocytic trafficking in Drosophila.</title>
        <authorList>
            <person name="Kraemer H."/>
            <person name="Phistry M."/>
        </authorList>
    </citation>
    <scope>NUCLEOTIDE SEQUENCE [MRNA] (ISOFORM 1)</scope>
</reference>
<reference key="2">
    <citation type="journal article" date="2004" name="Nature">
        <title>The DNA sequence and biology of human chromosome 19.</title>
        <authorList>
            <person name="Grimwood J."/>
            <person name="Gordon L.A."/>
            <person name="Olsen A.S."/>
            <person name="Terry A."/>
            <person name="Schmutz J."/>
            <person name="Lamerdin J.E."/>
            <person name="Hellsten U."/>
            <person name="Goodstein D."/>
            <person name="Couronne O."/>
            <person name="Tran-Gyamfi M."/>
            <person name="Aerts A."/>
            <person name="Altherr M."/>
            <person name="Ashworth L."/>
            <person name="Bajorek E."/>
            <person name="Black S."/>
            <person name="Branscomb E."/>
            <person name="Caenepeel S."/>
            <person name="Carrano A.V."/>
            <person name="Caoile C."/>
            <person name="Chan Y.M."/>
            <person name="Christensen M."/>
            <person name="Cleland C.A."/>
            <person name="Copeland A."/>
            <person name="Dalin E."/>
            <person name="Dehal P."/>
            <person name="Denys M."/>
            <person name="Detter J.C."/>
            <person name="Escobar J."/>
            <person name="Flowers D."/>
            <person name="Fotopulos D."/>
            <person name="Garcia C."/>
            <person name="Georgescu A.M."/>
            <person name="Glavina T."/>
            <person name="Gomez M."/>
            <person name="Gonzales E."/>
            <person name="Groza M."/>
            <person name="Hammon N."/>
            <person name="Hawkins T."/>
            <person name="Haydu L."/>
            <person name="Ho I."/>
            <person name="Huang W."/>
            <person name="Israni S."/>
            <person name="Jett J."/>
            <person name="Kadner K."/>
            <person name="Kimball H."/>
            <person name="Kobayashi A."/>
            <person name="Larionov V."/>
            <person name="Leem S.-H."/>
            <person name="Lopez F."/>
            <person name="Lou Y."/>
            <person name="Lowry S."/>
            <person name="Malfatti S."/>
            <person name="Martinez D."/>
            <person name="McCready P.M."/>
            <person name="Medina C."/>
            <person name="Morgan J."/>
            <person name="Nelson K."/>
            <person name="Nolan M."/>
            <person name="Ovcharenko I."/>
            <person name="Pitluck S."/>
            <person name="Pollard M."/>
            <person name="Popkie A.P."/>
            <person name="Predki P."/>
            <person name="Quan G."/>
            <person name="Ramirez L."/>
            <person name="Rash S."/>
            <person name="Retterer J."/>
            <person name="Rodriguez A."/>
            <person name="Rogers S."/>
            <person name="Salamov A."/>
            <person name="Salazar A."/>
            <person name="She X."/>
            <person name="Smith D."/>
            <person name="Slezak T."/>
            <person name="Solovyev V."/>
            <person name="Thayer N."/>
            <person name="Tice H."/>
            <person name="Tsai M."/>
            <person name="Ustaszewska A."/>
            <person name="Vo N."/>
            <person name="Wagner M."/>
            <person name="Wheeler J."/>
            <person name="Wu K."/>
            <person name="Xie G."/>
            <person name="Yang J."/>
            <person name="Dubchak I."/>
            <person name="Furey T.S."/>
            <person name="DeJong P."/>
            <person name="Dickson M."/>
            <person name="Gordon D."/>
            <person name="Eichler E.E."/>
            <person name="Pennacchio L.A."/>
            <person name="Richardson P."/>
            <person name="Stubbs L."/>
            <person name="Rokhsar D.S."/>
            <person name="Myers R.M."/>
            <person name="Rubin E.M."/>
            <person name="Lucas S.M."/>
        </authorList>
    </citation>
    <scope>NUCLEOTIDE SEQUENCE [LARGE SCALE GENOMIC DNA]</scope>
</reference>
<reference key="3">
    <citation type="journal article" date="2004" name="Genome Res.">
        <title>The status, quality, and expansion of the NIH full-length cDNA project: the Mammalian Gene Collection (MGC).</title>
        <authorList>
            <consortium name="The MGC Project Team"/>
        </authorList>
    </citation>
    <scope>NUCLEOTIDE SEQUENCE [LARGE SCALE MRNA] (ISOFORM 2)</scope>
    <scope>VARIANT GLN-488</scope>
    <source>
        <tissue>Ovary</tissue>
    </source>
</reference>
<reference key="4">
    <citation type="journal article" date="2001" name="J. Cell Biol.">
        <title>The Golgi-associated hook3 protein is a member of a novel family of microtubule-binding proteins.</title>
        <authorList>
            <person name="Walenta J.H."/>
            <person name="Didier A.J."/>
            <person name="Liu X."/>
            <person name="Kraemer H."/>
        </authorList>
    </citation>
    <scope>INTERACTION WITH MICROTUBULES</scope>
    <scope>SUBCELLULAR LOCATION</scope>
</reference>
<reference key="5">
    <citation type="journal article" date="2007" name="BMC Cell Biol.">
        <title>Hook2 contributes to aggresome formation.</title>
        <authorList>
            <person name="Szebenyi G."/>
            <person name="Wigley W.C."/>
            <person name="Hall B."/>
            <person name="Didier A.J."/>
            <person name="Yu M."/>
            <person name="Thomas P."/>
            <person name="Kraemer H."/>
        </authorList>
    </citation>
    <scope>FUNCTION</scope>
    <scope>SUBCELLULAR LOCATION</scope>
</reference>
<reference key="6">
    <citation type="journal article" date="2007" name="Traffic">
        <title>Hook2 localizes to the centrosome, binds directly to centriolin/CEP110 and contributes to centrosomal function.</title>
        <authorList>
            <person name="Szebenyi G."/>
            <person name="Hall B."/>
            <person name="Yu R."/>
            <person name="Hashim A.I."/>
            <person name="Kraemer H."/>
        </authorList>
    </citation>
    <scope>FUNCTION</scope>
    <scope>INTERACTION WITH CNTRL</scope>
    <scope>SUBCELLULAR LOCATION</scope>
</reference>
<reference key="7">
    <citation type="journal article" date="2008" name="Mol. Biol. Cell">
        <title>An FTS/Hook/p107(FHIP) complex interacts with and promotes endosomal clustering by the homotypic vacuolar protein sorting complex.</title>
        <authorList>
            <person name="Xu L."/>
            <person name="Sowa M.E."/>
            <person name="Chen J."/>
            <person name="Li X."/>
            <person name="Gygi S.P."/>
            <person name="Harper J.W."/>
        </authorList>
    </citation>
    <scope>IDENTIFICATION BY MASS SPECTROMETRY</scope>
    <scope>IDENTIFICATION IN THE FHF COMPLEX</scope>
    <scope>FUNCTION</scope>
    <scope>SELF-ASSOCIATION</scope>
    <scope>INTERACTION WITH AKTIP; HOOK1; HOOK3; VPS16 AND VPS41</scope>
</reference>
<reference key="8">
    <citation type="journal article" date="2008" name="Mol. Cell">
        <title>Kinase-selective enrichment enables quantitative phosphoproteomics of the kinome across the cell cycle.</title>
        <authorList>
            <person name="Daub H."/>
            <person name="Olsen J.V."/>
            <person name="Bairlein M."/>
            <person name="Gnad F."/>
            <person name="Oppermann F.S."/>
            <person name="Korner R."/>
            <person name="Greff Z."/>
            <person name="Keri G."/>
            <person name="Stemmann O."/>
            <person name="Mann M."/>
        </authorList>
    </citation>
    <scope>IDENTIFICATION BY MASS SPECTROMETRY [LARGE SCALE ANALYSIS]</scope>
    <source>
        <tissue>Cervix carcinoma</tissue>
    </source>
</reference>
<reference key="9">
    <citation type="journal article" date="2008" name="Proc. Natl. Acad. Sci. U.S.A.">
        <title>A quantitative atlas of mitotic phosphorylation.</title>
        <authorList>
            <person name="Dephoure N."/>
            <person name="Zhou C."/>
            <person name="Villen J."/>
            <person name="Beausoleil S.A."/>
            <person name="Bakalarski C.E."/>
            <person name="Elledge S.J."/>
            <person name="Gygi S.P."/>
        </authorList>
    </citation>
    <scope>PHOSPHORYLATION [LARGE SCALE ANALYSIS] AT SER-163</scope>
    <scope>IDENTIFICATION BY MASS SPECTROMETRY [LARGE SCALE ANALYSIS]</scope>
    <source>
        <tissue>Cervix carcinoma</tissue>
    </source>
</reference>
<reference key="10">
    <citation type="journal article" date="2009" name="Hum. Mol. Genet.">
        <title>SUT-2 potentiates tau-induced neurotoxicity in Caenorhabditis elegans.</title>
        <authorList>
            <person name="Guthrie C.R."/>
            <person name="Schellenberg G.D."/>
            <person name="Kraemer B.C."/>
        </authorList>
    </citation>
    <scope>INTERACTION WITH ZC3H14</scope>
</reference>
<reference key="11">
    <citation type="journal article" date="2013" name="J. Proteome Res.">
        <title>Toward a comprehensive characterization of a human cancer cell phosphoproteome.</title>
        <authorList>
            <person name="Zhou H."/>
            <person name="Di Palma S."/>
            <person name="Preisinger C."/>
            <person name="Peng M."/>
            <person name="Polat A.N."/>
            <person name="Heck A.J."/>
            <person name="Mohammed S."/>
        </authorList>
    </citation>
    <scope>PHOSPHORYLATION [LARGE SCALE ANALYSIS] AT THR-230</scope>
    <scope>IDENTIFICATION BY MASS SPECTROMETRY [LARGE SCALE ANALYSIS]</scope>
    <source>
        <tissue>Erythroleukemia</tissue>
    </source>
</reference>
<reference key="12">
    <citation type="journal article" date="2014" name="J. Proteomics">
        <title>An enzyme assisted RP-RPLC approach for in-depth analysis of human liver phosphoproteome.</title>
        <authorList>
            <person name="Bian Y."/>
            <person name="Song C."/>
            <person name="Cheng K."/>
            <person name="Dong M."/>
            <person name="Wang F."/>
            <person name="Huang J."/>
            <person name="Sun D."/>
            <person name="Wang L."/>
            <person name="Ye M."/>
            <person name="Zou H."/>
        </authorList>
    </citation>
    <scope>PHOSPHORYLATION [LARGE SCALE ANALYSIS] AT SER-710</scope>
    <scope>IDENTIFICATION BY MASS SPECTROMETRY [LARGE SCALE ANALYSIS]</scope>
    <source>
        <tissue>Liver</tissue>
    </source>
</reference>
<reference key="13">
    <citation type="journal article" date="2020" name="Mol. Biol. Cell">
        <title>The FTS-Hook-FHIP (FHF) complex interacts with AP-4 to mediate perinuclear distribution of AP-4 and its cargo ATG9A.</title>
        <authorList>
            <person name="Mattera R."/>
            <person name="Williamson C.D."/>
            <person name="Ren X."/>
            <person name="Bonifacino J.S."/>
        </authorList>
    </citation>
    <scope>FUNCTION</scope>
    <scope>INTERACTION WITH AP4M1 AND HOOK1</scope>
    <scope>SUBCELLULAR LOCATION</scope>
</reference>
<gene>
    <name type="primary">HOOK2</name>
</gene>
<dbReference type="EMBL" id="AF044924">
    <property type="protein sequence ID" value="AAC09299.1"/>
    <property type="molecule type" value="mRNA"/>
</dbReference>
<dbReference type="EMBL" id="AC018761">
    <property type="status" value="NOT_ANNOTATED_CDS"/>
    <property type="molecule type" value="Genomic_DNA"/>
</dbReference>
<dbReference type="EMBL" id="BC012443">
    <property type="protein sequence ID" value="AAH12443.1"/>
    <property type="molecule type" value="mRNA"/>
</dbReference>
<dbReference type="CCDS" id="CCDS42507.1">
    <molecule id="Q96ED9-2"/>
</dbReference>
<dbReference type="CCDS" id="CCDS42508.1">
    <molecule id="Q96ED9-1"/>
</dbReference>
<dbReference type="RefSeq" id="NP_001093646.1">
    <molecule id="Q96ED9-2"/>
    <property type="nucleotide sequence ID" value="NM_001100176.2"/>
</dbReference>
<dbReference type="RefSeq" id="NP_037444.2">
    <molecule id="Q96ED9-1"/>
    <property type="nucleotide sequence ID" value="NM_013312.3"/>
</dbReference>
<dbReference type="SMR" id="Q96ED9"/>
<dbReference type="BioGRID" id="118957">
    <property type="interactions" value="198"/>
</dbReference>
<dbReference type="ComplexPortal" id="CPX-2357">
    <property type="entry name" value="FTS-Hook-FHIP cargo adaptor complex, FHIP2A-HOOK2 variant"/>
</dbReference>
<dbReference type="ComplexPortal" id="CPX-2359">
    <property type="entry name" value="FTS-Hook-FHIP cargo adaptor complex, FHIP2B-HOOK1/2/3 variant"/>
</dbReference>
<dbReference type="CORUM" id="Q96ED9"/>
<dbReference type="FunCoup" id="Q96ED9">
    <property type="interactions" value="1801"/>
</dbReference>
<dbReference type="IntAct" id="Q96ED9">
    <property type="interactions" value="329"/>
</dbReference>
<dbReference type="MINT" id="Q96ED9"/>
<dbReference type="STRING" id="9606.ENSP00000380785"/>
<dbReference type="GlyGen" id="Q96ED9">
    <property type="glycosylation" value="1 site, 1 O-linked glycan (1 site)"/>
</dbReference>
<dbReference type="iPTMnet" id="Q96ED9"/>
<dbReference type="PhosphoSitePlus" id="Q96ED9"/>
<dbReference type="BioMuta" id="HOOK2"/>
<dbReference type="DMDM" id="296439323"/>
<dbReference type="jPOST" id="Q96ED9"/>
<dbReference type="MassIVE" id="Q96ED9"/>
<dbReference type="PaxDb" id="9606-ENSP00000380785"/>
<dbReference type="PeptideAtlas" id="Q96ED9"/>
<dbReference type="ProteomicsDB" id="76396">
    <molecule id="Q96ED9-1"/>
</dbReference>
<dbReference type="ProteomicsDB" id="76397">
    <molecule id="Q96ED9-2"/>
</dbReference>
<dbReference type="Pumba" id="Q96ED9"/>
<dbReference type="Antibodypedia" id="26165">
    <property type="antibodies" value="109 antibodies from 22 providers"/>
</dbReference>
<dbReference type="DNASU" id="29911"/>
<dbReference type="Ensembl" id="ENST00000264827.9">
    <molecule id="Q96ED9-2"/>
    <property type="protein sequence ID" value="ENSP00000264827.4"/>
    <property type="gene ID" value="ENSG00000095066.12"/>
</dbReference>
<dbReference type="Ensembl" id="ENST00000397668.8">
    <molecule id="Q96ED9-1"/>
    <property type="protein sequence ID" value="ENSP00000380785.2"/>
    <property type="gene ID" value="ENSG00000095066.12"/>
</dbReference>
<dbReference type="GeneID" id="29911"/>
<dbReference type="KEGG" id="hsa:29911"/>
<dbReference type="MANE-Select" id="ENST00000397668.8">
    <property type="protein sequence ID" value="ENSP00000380785.2"/>
    <property type="RefSeq nucleotide sequence ID" value="NM_013312.3"/>
    <property type="RefSeq protein sequence ID" value="NP_037444.2"/>
</dbReference>
<dbReference type="UCSC" id="uc002muy.3">
    <molecule id="Q96ED9-1"/>
    <property type="organism name" value="human"/>
</dbReference>
<dbReference type="AGR" id="HGNC:19885"/>
<dbReference type="CTD" id="29911"/>
<dbReference type="DisGeNET" id="29911"/>
<dbReference type="GeneCards" id="HOOK2"/>
<dbReference type="HGNC" id="HGNC:19885">
    <property type="gene designation" value="HOOK2"/>
</dbReference>
<dbReference type="HPA" id="ENSG00000095066">
    <property type="expression patterns" value="Low tissue specificity"/>
</dbReference>
<dbReference type="MIM" id="607824">
    <property type="type" value="gene"/>
</dbReference>
<dbReference type="neXtProt" id="NX_Q96ED9"/>
<dbReference type="OpenTargets" id="ENSG00000095066"/>
<dbReference type="PharmGKB" id="PA134986864"/>
<dbReference type="VEuPathDB" id="HostDB:ENSG00000095066"/>
<dbReference type="eggNOG" id="ENOG502QTJ1">
    <property type="taxonomic scope" value="Eukaryota"/>
</dbReference>
<dbReference type="GeneTree" id="ENSGT00940000160152"/>
<dbReference type="HOGENOM" id="CLU_011214_2_0_1"/>
<dbReference type="InParanoid" id="Q96ED9"/>
<dbReference type="OMA" id="RGQLDTY"/>
<dbReference type="OrthoDB" id="49395at2759"/>
<dbReference type="PAN-GO" id="Q96ED9">
    <property type="GO annotations" value="6 GO annotations based on evolutionary models"/>
</dbReference>
<dbReference type="PhylomeDB" id="Q96ED9"/>
<dbReference type="TreeFam" id="TF320231"/>
<dbReference type="PathwayCommons" id="Q96ED9"/>
<dbReference type="SignaLink" id="Q96ED9"/>
<dbReference type="SIGNOR" id="Q96ED9"/>
<dbReference type="BioGRID-ORCS" id="29911">
    <property type="hits" value="15 hits in 1154 CRISPR screens"/>
</dbReference>
<dbReference type="CD-CODE" id="8C2F96ED">
    <property type="entry name" value="Centrosome"/>
</dbReference>
<dbReference type="ChiTaRS" id="HOOK2">
    <property type="organism name" value="human"/>
</dbReference>
<dbReference type="GeneWiki" id="HOOK2"/>
<dbReference type="GenomeRNAi" id="29911"/>
<dbReference type="Pharos" id="Q96ED9">
    <property type="development level" value="Tbio"/>
</dbReference>
<dbReference type="PRO" id="PR:Q96ED9"/>
<dbReference type="Proteomes" id="UP000005640">
    <property type="component" value="Chromosome 19"/>
</dbReference>
<dbReference type="RNAct" id="Q96ED9">
    <property type="molecule type" value="protein"/>
</dbReference>
<dbReference type="Bgee" id="ENSG00000095066">
    <property type="expression patterns" value="Expressed in right lobe of thyroid gland and 153 other cell types or tissues"/>
</dbReference>
<dbReference type="ExpressionAtlas" id="Q96ED9">
    <property type="expression patterns" value="baseline and differential"/>
</dbReference>
<dbReference type="GO" id="GO:0005813">
    <property type="term" value="C:centrosome"/>
    <property type="evidence" value="ECO:0000314"/>
    <property type="project" value="UniProtKB"/>
</dbReference>
<dbReference type="GO" id="GO:0005737">
    <property type="term" value="C:cytoplasm"/>
    <property type="evidence" value="ECO:0000318"/>
    <property type="project" value="GO_Central"/>
</dbReference>
<dbReference type="GO" id="GO:0005829">
    <property type="term" value="C:cytosol"/>
    <property type="evidence" value="ECO:0000314"/>
    <property type="project" value="HPA"/>
</dbReference>
<dbReference type="GO" id="GO:0070695">
    <property type="term" value="C:FHF complex"/>
    <property type="evidence" value="ECO:0000314"/>
    <property type="project" value="UniProtKB"/>
</dbReference>
<dbReference type="GO" id="GO:0043231">
    <property type="term" value="C:intracellular membrane-bounded organelle"/>
    <property type="evidence" value="ECO:0000314"/>
    <property type="project" value="HPA"/>
</dbReference>
<dbReference type="GO" id="GO:0005874">
    <property type="term" value="C:microtubule"/>
    <property type="evidence" value="ECO:0007669"/>
    <property type="project" value="UniProtKB-KW"/>
</dbReference>
<dbReference type="GO" id="GO:0005802">
    <property type="term" value="C:trans-Golgi network"/>
    <property type="evidence" value="ECO:0000314"/>
    <property type="project" value="UniProtKB"/>
</dbReference>
<dbReference type="GO" id="GO:0051959">
    <property type="term" value="F:dynein light intermediate chain binding"/>
    <property type="evidence" value="ECO:0000318"/>
    <property type="project" value="GO_Central"/>
</dbReference>
<dbReference type="GO" id="GO:0042802">
    <property type="term" value="F:identical protein binding"/>
    <property type="evidence" value="ECO:0000353"/>
    <property type="project" value="UniProtKB"/>
</dbReference>
<dbReference type="GO" id="GO:0008017">
    <property type="term" value="F:microtubule binding"/>
    <property type="evidence" value="ECO:0000318"/>
    <property type="project" value="GO_Central"/>
</dbReference>
<dbReference type="GO" id="GO:0031122">
    <property type="term" value="P:cytoplasmic microtubule organization"/>
    <property type="evidence" value="ECO:0000318"/>
    <property type="project" value="GO_Central"/>
</dbReference>
<dbReference type="GO" id="GO:0030705">
    <property type="term" value="P:cytoskeleton-dependent intracellular transport"/>
    <property type="evidence" value="ECO:0000318"/>
    <property type="project" value="GO_Central"/>
</dbReference>
<dbReference type="GO" id="GO:0045022">
    <property type="term" value="P:early endosome to late endosome transport"/>
    <property type="evidence" value="ECO:0000315"/>
    <property type="project" value="UniProtKB"/>
</dbReference>
<dbReference type="GO" id="GO:0006897">
    <property type="term" value="P:endocytosis"/>
    <property type="evidence" value="ECO:0000304"/>
    <property type="project" value="ProtInc"/>
</dbReference>
<dbReference type="GO" id="GO:0007032">
    <property type="term" value="P:endosome organization"/>
    <property type="evidence" value="ECO:0000315"/>
    <property type="project" value="UniProtKB"/>
</dbReference>
<dbReference type="GO" id="GO:0008333">
    <property type="term" value="P:endosome to lysosome transport"/>
    <property type="evidence" value="ECO:0000315"/>
    <property type="project" value="UniProtKB"/>
</dbReference>
<dbReference type="GO" id="GO:0007040">
    <property type="term" value="P:lysosome organization"/>
    <property type="evidence" value="ECO:0000315"/>
    <property type="project" value="UniProtKB"/>
</dbReference>
<dbReference type="GO" id="GO:1905719">
    <property type="term" value="P:protein localization to perinuclear region of cytoplasm"/>
    <property type="evidence" value="ECO:0000315"/>
    <property type="project" value="UniProtKB"/>
</dbReference>
<dbReference type="GO" id="GO:0015031">
    <property type="term" value="P:protein transport"/>
    <property type="evidence" value="ECO:0007669"/>
    <property type="project" value="UniProtKB-KW"/>
</dbReference>
<dbReference type="CDD" id="cd22227">
    <property type="entry name" value="HkD_Hook2"/>
    <property type="match status" value="1"/>
</dbReference>
<dbReference type="FunFam" id="1.10.418.10:FF:000024">
    <property type="entry name" value="Hook homolog 3 (Drosophila)"/>
    <property type="match status" value="1"/>
</dbReference>
<dbReference type="Gene3D" id="1.10.418.10">
    <property type="entry name" value="Calponin-like domain"/>
    <property type="match status" value="1"/>
</dbReference>
<dbReference type="InterPro" id="IPR001715">
    <property type="entry name" value="CH_dom"/>
</dbReference>
<dbReference type="InterPro" id="IPR036872">
    <property type="entry name" value="CH_dom_sf"/>
</dbReference>
<dbReference type="InterPro" id="IPR008636">
    <property type="entry name" value="Hook_C"/>
</dbReference>
<dbReference type="InterPro" id="IPR043936">
    <property type="entry name" value="HOOK_N"/>
</dbReference>
<dbReference type="PANTHER" id="PTHR18947">
    <property type="entry name" value="HOOK PROTEINS"/>
    <property type="match status" value="1"/>
</dbReference>
<dbReference type="PANTHER" id="PTHR18947:SF37">
    <property type="entry name" value="PROTEIN HOOK HOMOLOG 2"/>
    <property type="match status" value="1"/>
</dbReference>
<dbReference type="Pfam" id="PF05622">
    <property type="entry name" value="HOOK"/>
    <property type="match status" value="1"/>
</dbReference>
<dbReference type="Pfam" id="PF19047">
    <property type="entry name" value="HOOK_N"/>
    <property type="match status" value="1"/>
</dbReference>
<dbReference type="SUPFAM" id="SSF116907">
    <property type="entry name" value="Hook domain"/>
    <property type="match status" value="1"/>
</dbReference>
<dbReference type="PROSITE" id="PS50021">
    <property type="entry name" value="CH"/>
    <property type="match status" value="1"/>
</dbReference>
<organism>
    <name type="scientific">Homo sapiens</name>
    <name type="common">Human</name>
    <dbReference type="NCBI Taxonomy" id="9606"/>
    <lineage>
        <taxon>Eukaryota</taxon>
        <taxon>Metazoa</taxon>
        <taxon>Chordata</taxon>
        <taxon>Craniata</taxon>
        <taxon>Vertebrata</taxon>
        <taxon>Euteleostomi</taxon>
        <taxon>Mammalia</taxon>
        <taxon>Eutheria</taxon>
        <taxon>Euarchontoglires</taxon>
        <taxon>Primates</taxon>
        <taxon>Haplorrhini</taxon>
        <taxon>Catarrhini</taxon>
        <taxon>Hominidae</taxon>
        <taxon>Homo</taxon>
    </lineage>
</organism>
<sequence>MSVDKAELCGSLLTWLQTFHVPSPCASPQDLSSGLAVAYVLNQIDPSWFNEAWLQGISEDPGPNWKLKVSNLKMVLRSLVEYSQDVLAHPVSEEHLPDVSLIGEFSDPAELGKLLQLVLGCAISCEKKQDHIQRIMTLEESVQHVVMEAIQELMTKDTPDSLSPETYGNFDSQSRRYYFLSEEAEEGDELQQRCLDLERQLMLLSEEKQSLAQENAGLRERMGRPEGEGTPGLTAKKLLLLQSQLEQLQEENFRLESGREDERLRCAELEREVAELQHRNQALTSLAQEAQALKDEMDELRQSSERAGQLEATLTSCRRRLGELRELRRQVRQLEERNAGHAERTRQLEDELRRAGSLRAQLEAQRRQVQELQGQRQEEAMKAEKWLFECRNLEEKYESVTKEKERLLAERDSLREANEELRCAQLQPRGLTQADPSLDPTSTPVDNLAAEILPAELRETLLRLQLENKRLCRQEAADRERQEELQRHLEDANRARHGLETQHRLNQQQLSELRAQVEDLQKALQEQGGKTEDAISILLKRKLEEHLQKLHEADLELQRKREYIEELEPPTDSSTARRIEELQHNLQKKDADLRAMEERYRRYVDKARMVMQTMEPKQRPAAGAPPELHSLRTQLRERDVRIRHLEMDFEKSRSQREQEEKLLISAWYNMGMALQQRAGEERAPAHAQSFLAQQRLATNSRRGPLGRLASLNLRPTDKH</sequence>
<protein>
    <recommendedName>
        <fullName>Protein Hook homolog 2</fullName>
        <shortName>h-hook2</shortName>
        <shortName>hHK2</shortName>
    </recommendedName>
</protein>
<accession>Q96ED9</accession>
<accession>O60562</accession>
<keyword id="KW-0025">Alternative splicing</keyword>
<keyword id="KW-0175">Coiled coil</keyword>
<keyword id="KW-0963">Cytoplasm</keyword>
<keyword id="KW-0206">Cytoskeleton</keyword>
<keyword id="KW-0333">Golgi apparatus</keyword>
<keyword id="KW-0493">Microtubule</keyword>
<keyword id="KW-0597">Phosphoprotein</keyword>
<keyword id="KW-0653">Protein transport</keyword>
<keyword id="KW-1267">Proteomics identification</keyword>
<keyword id="KW-1185">Reference proteome</keyword>
<keyword id="KW-0813">Transport</keyword>
<comment type="function">
    <text evidence="7 8 9 11">Component of the FTS/Hook/FHIP complex (FHF complex). The FHF complex may function to promote vesicle trafficking and/or fusion via the homotypic vesicular protein sorting complex (the HOPS complex). Contributes to the establishment and maintenance of centrosome function. May function in the positioning or formation of aggresomes, which are pericentriolar accumulations of misfolded proteins, proteasomes and chaperones. FHF complex promotes the distribution of AP-4 complex to the perinuclear area of the cell (PubMed:32073997).</text>
</comment>
<comment type="subunit">
    <text evidence="1 5 7 9 10 11">Self-associates (PubMed:18799622). Component of the FTS/Hook/FHIP complex (FHF complex), composed of AKTIP/FTS, FHIP1B, and one or more members of the Hook family of proteins HOOK1, HOOK2, and HOOK3 (PubMed:18799622). May interact directly with AKTIP/FTS, HOOK1 and HOOK3 (PubMed:18799622, PubMed:32073997). Associates with several subunits of the homotypic vesicular sorting complex (the HOPS complex) including VPS16 and VPS41; these interactions may be indirect (PubMed:18799622). Interacts with CNTRL (PubMed:17140400). Interacts with microtubules (PubMed:11238449). Interacts with ZC3H14 (PubMed:19273536). Interacts with LRGUK (via guanylate kinase-like domain) (By similarity). Interacts with CCDC181 (By similarity). Interacts with AP4M1; the interaction is direct, mediates the interaction between FTS-Hook-FHIP (FHF) complex and AP-4 and the perinuclear distribution of AP-4 (PubMed:32073997).</text>
</comment>
<comment type="interaction">
    <interactant intactId="EBI-743290">
        <id>Q96ED9</id>
    </interactant>
    <interactant intactId="EBI-711399">
        <id>Q9H8T0</id>
        <label>AKTIP</label>
    </interactant>
    <organismsDiffer>false</organismsDiffer>
    <experiments>8</experiments>
</comment>
<comment type="interaction">
    <interactant intactId="EBI-743290">
        <id>Q96ED9</id>
    </interactant>
    <interactant intactId="EBI-744859">
        <id>Q96IX9</id>
        <label>ANKRD36BP1</label>
    </interactant>
    <organismsDiffer>false</organismsDiffer>
    <experiments>3</experiments>
</comment>
<comment type="interaction">
    <interactant intactId="EBI-743290">
        <id>Q96ED9</id>
    </interactant>
    <interactant intactId="EBI-541426">
        <id>Q9BXS5</id>
        <label>AP1M1</label>
    </interactant>
    <organismsDiffer>false</organismsDiffer>
    <experiments>3</experiments>
</comment>
<comment type="interaction">
    <interactant intactId="EBI-743290">
        <id>Q96ED9</id>
    </interactant>
    <interactant intactId="EBI-740841">
        <id>Q8N5R6</id>
        <label>CCDC33</label>
    </interactant>
    <organismsDiffer>false</organismsDiffer>
    <experiments>2</experiments>
</comment>
<comment type="interaction">
    <interactant intactId="EBI-743290">
        <id>Q96ED9</id>
    </interactant>
    <interactant intactId="EBI-5453285">
        <id>Q2TBE0</id>
        <label>CWF19L2</label>
    </interactant>
    <organismsDiffer>false</organismsDiffer>
    <experiments>3</experiments>
</comment>
<comment type="interaction">
    <interactant intactId="EBI-743290">
        <id>Q96ED9</id>
    </interactant>
    <interactant intactId="EBI-749800">
        <id>Q9UII6</id>
        <label>DUSP13B</label>
    </interactant>
    <organismsDiffer>false</organismsDiffer>
    <experiments>3</experiments>
</comment>
<comment type="interaction">
    <interactant intactId="EBI-743290">
        <id>Q96ED9</id>
    </interactant>
    <interactant intactId="EBI-7054959">
        <id>Q5W0V3</id>
        <label>FHIP2A</label>
    </interactant>
    <organismsDiffer>false</organismsDiffer>
    <experiments>4</experiments>
</comment>
<comment type="interaction">
    <interactant intactId="EBI-743290">
        <id>Q96ED9</id>
    </interactant>
    <interactant intactId="EBI-740244">
        <id>Q7Z3B3</id>
        <label>KANSL1</label>
    </interactant>
    <organismsDiffer>false</organismsDiffer>
    <experiments>4</experiments>
</comment>
<comment type="interaction">
    <interactant intactId="EBI-743290">
        <id>Q96ED9</id>
    </interactant>
    <interactant intactId="EBI-749285">
        <id>Q15311</id>
        <label>RALBP1</label>
    </interactant>
    <organismsDiffer>false</organismsDiffer>
    <experiments>3</experiments>
</comment>
<comment type="interaction">
    <interactant intactId="EBI-743290">
        <id>Q96ED9</id>
    </interactant>
    <interactant intactId="EBI-349968">
        <id>O43463</id>
        <label>SUV39H1</label>
    </interactant>
    <organismsDiffer>false</organismsDiffer>
    <experiments>4</experiments>
</comment>
<comment type="interaction">
    <interactant intactId="EBI-743290">
        <id>Q96ED9</id>
    </interactant>
    <interactant intactId="EBI-10225961">
        <id>Q08E77</id>
        <label>UTP14C</label>
    </interactant>
    <organismsDiffer>false</organismsDiffer>
    <experiments>3</experiments>
</comment>
<comment type="interaction">
    <interactant intactId="EBI-743290">
        <id>Q96ED9</id>
    </interactant>
    <interactant intactId="EBI-740767">
        <id>Q53FD0</id>
        <label>ZC2HC1C</label>
    </interactant>
    <organismsDiffer>false</organismsDiffer>
    <experiments>3</experiments>
</comment>
<comment type="interaction">
    <interactant intactId="EBI-10961706">
        <id>Q96ED9-2</id>
    </interactant>
    <interactant intactId="EBI-8643161">
        <id>Q9NX04</id>
        <label>AIRIM</label>
    </interactant>
    <organismsDiffer>false</organismsDiffer>
    <experiments>3</experiments>
</comment>
<comment type="interaction">
    <interactant intactId="EBI-10961706">
        <id>Q96ED9-2</id>
    </interactant>
    <interactant intactId="EBI-711399">
        <id>Q9H8T0</id>
        <label>AKTIP</label>
    </interactant>
    <organismsDiffer>false</organismsDiffer>
    <experiments>3</experiments>
</comment>
<comment type="interaction">
    <interactant intactId="EBI-10961706">
        <id>Q96ED9-2</id>
    </interactant>
    <interactant intactId="EBI-17183751">
        <id>X5D778</id>
        <label>ANKRD11</label>
    </interactant>
    <organismsDiffer>false</organismsDiffer>
    <experiments>4</experiments>
</comment>
<comment type="interaction">
    <interactant intactId="EBI-10961706">
        <id>Q96ED9-2</id>
    </interactant>
    <interactant intactId="EBI-541426">
        <id>Q9BXS5</id>
        <label>AP1M1</label>
    </interactant>
    <organismsDiffer>false</organismsDiffer>
    <experiments>3</experiments>
</comment>
<comment type="interaction">
    <interactant intactId="EBI-10961706">
        <id>Q96ED9-2</id>
    </interactant>
    <interactant intactId="EBI-1047414">
        <id>Q9H1Y0</id>
        <label>ATG5</label>
    </interactant>
    <organismsDiffer>false</organismsDiffer>
    <experiments>3</experiments>
</comment>
<comment type="interaction">
    <interactant intactId="EBI-10961706">
        <id>Q96ED9-2</id>
    </interactant>
    <interactant intactId="EBI-358049">
        <id>Q13895</id>
        <label>BYSL</label>
    </interactant>
    <organismsDiffer>false</organismsDiffer>
    <experiments>3</experiments>
</comment>
<comment type="interaction">
    <interactant intactId="EBI-10961706">
        <id>Q96ED9-2</id>
    </interactant>
    <interactant intactId="EBI-12011224">
        <id>Q9NPB3</id>
        <label>CABP2</label>
    </interactant>
    <organismsDiffer>false</organismsDiffer>
    <experiments>3</experiments>
</comment>
<comment type="interaction">
    <interactant intactId="EBI-10961706">
        <id>Q96ED9-2</id>
    </interactant>
    <interactant intactId="EBI-712912">
        <id>Q9HC52</id>
        <label>CBX8</label>
    </interactant>
    <organismsDiffer>false</organismsDiffer>
    <experiments>3</experiments>
</comment>
<comment type="interaction">
    <interactant intactId="EBI-10961706">
        <id>Q96ED9-2</id>
    </interactant>
    <interactant intactId="EBI-11748295">
        <id>E9PSE9</id>
        <label>CCDC198</label>
    </interactant>
    <organismsDiffer>false</organismsDiffer>
    <experiments>3</experiments>
</comment>
<comment type="interaction">
    <interactant intactId="EBI-10961706">
        <id>Q96ED9-2</id>
    </interactant>
    <interactant intactId="EBI-746238">
        <id>Q07002</id>
        <label>CDK18</label>
    </interactant>
    <organismsDiffer>false</organismsDiffer>
    <experiments>3</experiments>
</comment>
<comment type="interaction">
    <interactant intactId="EBI-10961706">
        <id>Q96ED9-2</id>
    </interactant>
    <interactant intactId="EBI-375077">
        <id>P38936</id>
        <label>CDKN1A</label>
    </interactant>
    <organismsDiffer>false</organismsDiffer>
    <experiments>3</experiments>
</comment>
<comment type="interaction">
    <interactant intactId="EBI-10961706">
        <id>Q96ED9-2</id>
    </interactant>
    <interactant intactId="EBI-372775">
        <id>Q96GE4</id>
        <label>CEP95</label>
    </interactant>
    <organismsDiffer>false</organismsDiffer>
    <experiments>3</experiments>
</comment>
<comment type="interaction">
    <interactant intactId="EBI-10961706">
        <id>Q96ED9-2</id>
    </interactant>
    <interactant intactId="EBI-5453285">
        <id>Q2TBE0</id>
        <label>CWF19L2</label>
    </interactant>
    <organismsDiffer>false</organismsDiffer>
    <experiments>3</experiments>
</comment>
<comment type="interaction">
    <interactant intactId="EBI-10961706">
        <id>Q96ED9-2</id>
    </interactant>
    <interactant intactId="EBI-11521003">
        <id>Q9UIA0</id>
        <label>CYTH4</label>
    </interactant>
    <organismsDiffer>false</organismsDiffer>
    <experiments>3</experiments>
</comment>
<comment type="interaction">
    <interactant intactId="EBI-10961706">
        <id>Q96ED9-2</id>
    </interactant>
    <interactant intactId="EBI-14148644">
        <id>O43602-2</id>
        <label>DCX</label>
    </interactant>
    <organismsDiffer>false</organismsDiffer>
    <experiments>3</experiments>
</comment>
<comment type="interaction">
    <interactant intactId="EBI-10961706">
        <id>Q96ED9-2</id>
    </interactant>
    <interactant intactId="EBI-351257">
        <id>P26196</id>
        <label>DDX6</label>
    </interactant>
    <organismsDiffer>false</organismsDiffer>
    <experiments>3</experiments>
</comment>
<comment type="interaction">
    <interactant intactId="EBI-10961706">
        <id>Q96ED9-2</id>
    </interactant>
    <interactant intactId="EBI-353818">
        <id>O15371</id>
        <label>EIF3D</label>
    </interactant>
    <organismsDiffer>false</organismsDiffer>
    <experiments>3</experiments>
</comment>
<comment type="interaction">
    <interactant intactId="EBI-10961706">
        <id>Q96ED9-2</id>
    </interactant>
    <interactant intactId="EBI-744099">
        <id>Q9H0I2</id>
        <label>ENKD1</label>
    </interactant>
    <organismsDiffer>false</organismsDiffer>
    <experiments>3</experiments>
</comment>
<comment type="interaction">
    <interactant intactId="EBI-10961706">
        <id>Q96ED9-2</id>
    </interactant>
    <interactant intactId="EBI-1752811">
        <id>Q9BQ89</id>
        <label>FAM110A</label>
    </interactant>
    <organismsDiffer>false</organismsDiffer>
    <experiments>3</experiments>
</comment>
<comment type="interaction">
    <interactant intactId="EBI-10961706">
        <id>Q96ED9-2</id>
    </interactant>
    <interactant intactId="EBI-719941">
        <id>Q3B820</id>
        <label>FAM161A</label>
    </interactant>
    <organismsDiffer>false</organismsDiffer>
    <experiments>3</experiments>
</comment>
<comment type="interaction">
    <interactant intactId="EBI-10961706">
        <id>Q96ED9-2</id>
    </interactant>
    <interactant intactId="EBI-7225287">
        <id>Q96MY7</id>
        <label>FAM161B</label>
    </interactant>
    <organismsDiffer>false</organismsDiffer>
    <experiments>3</experiments>
</comment>
<comment type="interaction">
    <interactant intactId="EBI-10961706">
        <id>Q96ED9-2</id>
    </interactant>
    <interactant intactId="EBI-742802">
        <id>Q9Y247</id>
        <label>FAM50B</label>
    </interactant>
    <organismsDiffer>false</organismsDiffer>
    <experiments>3</experiments>
</comment>
<comment type="interaction">
    <interactant intactId="EBI-10961706">
        <id>Q96ED9-2</id>
    </interactant>
    <interactant intactId="EBI-6658203">
        <id>Q86YD7</id>
        <label>FAM90A1</label>
    </interactant>
    <organismsDiffer>false</organismsDiffer>
    <experiments>3</experiments>
</comment>
<comment type="interaction">
    <interactant intactId="EBI-10961706">
        <id>Q96ED9-2</id>
    </interactant>
    <interactant intactId="EBI-11479104">
        <id>O43320</id>
        <label>FGF16</label>
    </interactant>
    <organismsDiffer>false</organismsDiffer>
    <experiments>3</experiments>
</comment>
<comment type="interaction">
    <interactant intactId="EBI-10961706">
        <id>Q96ED9-2</id>
    </interactant>
    <interactant intactId="EBI-719415">
        <id>Q4VC44</id>
        <label>FLYWCH1</label>
    </interactant>
    <organismsDiffer>false</organismsDiffer>
    <experiments>3</experiments>
</comment>
<comment type="interaction">
    <interactant intactId="EBI-10961706">
        <id>Q96ED9-2</id>
    </interactant>
    <interactant intactId="EBI-7960826">
        <id>Q8NHY3</id>
        <label>GAS2L2</label>
    </interactant>
    <organismsDiffer>false</organismsDiffer>
    <experiments>3</experiments>
</comment>
<comment type="interaction">
    <interactant intactId="EBI-10961706">
        <id>Q96ED9-2</id>
    </interactant>
    <interactant intactId="EBI-744104">
        <id>P55040</id>
        <label>GEM</label>
    </interactant>
    <organismsDiffer>false</organismsDiffer>
    <experiments>3</experiments>
</comment>
<comment type="interaction">
    <interactant intactId="EBI-10961706">
        <id>Q96ED9-2</id>
    </interactant>
    <interactant intactId="EBI-746309">
        <id>Q92917</id>
        <label>GPKOW</label>
    </interactant>
    <organismsDiffer>false</organismsDiffer>
    <experiments>3</experiments>
</comment>
<comment type="interaction">
    <interactant intactId="EBI-10961706">
        <id>Q96ED9-2</id>
    </interactant>
    <interactant intactId="EBI-11953488">
        <id>P56524-2</id>
        <label>HDAC4</label>
    </interactant>
    <organismsDiffer>false</organismsDiffer>
    <experiments>3</experiments>
</comment>
<comment type="interaction">
    <interactant intactId="EBI-10961706">
        <id>Q96ED9-2</id>
    </interactant>
    <interactant intactId="EBI-3893317">
        <id>P09067</id>
        <label>HOXB5</label>
    </interactant>
    <organismsDiffer>false</organismsDiffer>
    <experiments>3</experiments>
</comment>
<comment type="interaction">
    <interactant intactId="EBI-10961706">
        <id>Q96ED9-2</id>
    </interactant>
    <interactant intactId="EBI-17178971">
        <id>Q14005-2</id>
        <label>IL16</label>
    </interactant>
    <organismsDiffer>false</organismsDiffer>
    <experiments>3</experiments>
</comment>
<comment type="interaction">
    <interactant intactId="EBI-10961706">
        <id>Q96ED9-2</id>
    </interactant>
    <interactant intactId="EBI-10976190">
        <id>Q9Y573-2</id>
        <label>IPP</label>
    </interactant>
    <organismsDiffer>false</organismsDiffer>
    <experiments>3</experiments>
</comment>
<comment type="interaction">
    <interactant intactId="EBI-10961706">
        <id>Q96ED9-2</id>
    </interactant>
    <interactant intactId="EBI-8472129">
        <id>Q9HAQ2</id>
        <label>KIF9</label>
    </interactant>
    <organismsDiffer>false</organismsDiffer>
    <experiments>3</experiments>
</comment>
<comment type="interaction">
    <interactant intactId="EBI-10961706">
        <id>Q96ED9-2</id>
    </interactant>
    <interactant intactId="EBI-298429">
        <id>P04264</id>
        <label>KRT1</label>
    </interactant>
    <organismsDiffer>false</organismsDiffer>
    <experiments>3</experiments>
</comment>
<comment type="interaction">
    <interactant intactId="EBI-10961706">
        <id>Q96ED9-2</id>
    </interactant>
    <interactant intactId="EBI-726510">
        <id>Q96BZ8</id>
        <label>LENG1</label>
    </interactant>
    <organismsDiffer>false</organismsDiffer>
    <experiments>3</experiments>
</comment>
<comment type="interaction">
    <interactant intactId="EBI-10961706">
        <id>Q96ED9-2</id>
    </interactant>
    <interactant intactId="EBI-739832">
        <id>Q8TBB1</id>
        <label>LNX1</label>
    </interactant>
    <organismsDiffer>false</organismsDiffer>
    <experiments>3</experiments>
</comment>
<comment type="interaction">
    <interactant intactId="EBI-10961706">
        <id>Q96ED9-2</id>
    </interactant>
    <interactant intactId="EBI-9478535">
        <id>Q96M69</id>
        <label>LRGUK</label>
    </interactant>
    <organismsDiffer>false</organismsDiffer>
    <experiments>3</experiments>
</comment>
<comment type="interaction">
    <interactant intactId="EBI-10961706">
        <id>Q96ED9-2</id>
    </interactant>
    <interactant intactId="EBI-348259">
        <id>Q96EZ8</id>
        <label>MCRS1</label>
    </interactant>
    <organismsDiffer>false</organismsDiffer>
    <experiments>3</experiments>
</comment>
<comment type="interaction">
    <interactant intactId="EBI-10961706">
        <id>Q96ED9-2</id>
    </interactant>
    <interactant intactId="EBI-1048159">
        <id>P55081</id>
        <label>MFAP1</label>
    </interactant>
    <organismsDiffer>false</organismsDiffer>
    <experiments>3</experiments>
</comment>
<comment type="interaction">
    <interactant intactId="EBI-10961706">
        <id>Q96ED9-2</id>
    </interactant>
    <interactant intactId="EBI-14086479">
        <id>Q8IVT4</id>
        <label>MGC50722</label>
    </interactant>
    <organismsDiffer>false</organismsDiffer>
    <experiments>3</experiments>
</comment>
<comment type="interaction">
    <interactant intactId="EBI-10961706">
        <id>Q96ED9-2</id>
    </interactant>
    <interactant intactId="EBI-9675802">
        <id>Q6PF18</id>
        <label>MORN3</label>
    </interactant>
    <organismsDiffer>false</organismsDiffer>
    <experiments>3</experiments>
</comment>
<comment type="interaction">
    <interactant intactId="EBI-10961706">
        <id>Q96ED9-2</id>
    </interactant>
    <interactant intactId="EBI-2350461">
        <id>Q15777</id>
        <label>MPPED2</label>
    </interactant>
    <organismsDiffer>false</organismsDiffer>
    <experiments>3</experiments>
</comment>
<comment type="interaction">
    <interactant intactId="EBI-10961706">
        <id>Q96ED9-2</id>
    </interactant>
    <interactant intactId="EBI-6952711">
        <id>Q8WY64</id>
        <label>MYLIP</label>
    </interactant>
    <organismsDiffer>false</organismsDiffer>
    <experiments>3</experiments>
</comment>
<comment type="interaction">
    <interactant intactId="EBI-10961706">
        <id>Q96ED9-2</id>
    </interactant>
    <interactant intactId="EBI-11750983">
        <id>Q9HC98-4</id>
        <label>NEK6</label>
    </interactant>
    <organismsDiffer>false</organismsDiffer>
    <experiments>3</experiments>
</comment>
<comment type="interaction">
    <interactant intactId="EBI-10961706">
        <id>Q96ED9-2</id>
    </interactant>
    <interactant intactId="EBI-12081862">
        <id>P00973-2</id>
        <label>OAS1</label>
    </interactant>
    <organismsDiffer>false</organismsDiffer>
    <experiments>3</experiments>
</comment>
<comment type="interaction">
    <interactant intactId="EBI-10961706">
        <id>Q96ED9-2</id>
    </interactant>
    <interactant intactId="EBI-17644640">
        <id>Q9NR21-1</id>
        <label>PARP11</label>
    </interactant>
    <organismsDiffer>false</organismsDiffer>
    <experiments>3</experiments>
</comment>
<comment type="interaction">
    <interactant intactId="EBI-10961706">
        <id>Q96ED9-2</id>
    </interactant>
    <interactant intactId="EBI-2568609">
        <id>Q9BSJ6</id>
        <label>PIMREG</label>
    </interactant>
    <organismsDiffer>false</organismsDiffer>
    <experiments>3</experiments>
</comment>
<comment type="interaction">
    <interactant intactId="EBI-10961706">
        <id>Q96ED9-2</id>
    </interactant>
    <interactant intactId="EBI-9087684">
        <id>Q13835-2</id>
        <label>PKP1</label>
    </interactant>
    <organismsDiffer>false</organismsDiffer>
    <experiments>3</experiments>
</comment>
<comment type="interaction">
    <interactant intactId="EBI-10961706">
        <id>Q96ED9-2</id>
    </interactant>
    <interactant intactId="EBI-10987518">
        <id>Q99959-2</id>
        <label>PKP2</label>
    </interactant>
    <organismsDiffer>false</organismsDiffer>
    <experiments>3</experiments>
</comment>
<comment type="interaction">
    <interactant intactId="EBI-10961706">
        <id>Q96ED9-2</id>
    </interactant>
    <interactant intactId="EBI-2557469">
        <id>Q6NYC8</id>
        <label>PPP1R18</label>
    </interactant>
    <organismsDiffer>false</organismsDiffer>
    <experiments>3</experiments>
</comment>
<comment type="interaction">
    <interactant intactId="EBI-10961706">
        <id>Q96ED9-2</id>
    </interactant>
    <interactant intactId="EBI-308500">
        <id>Q5T8A7</id>
        <label>PPP1R26</label>
    </interactant>
    <organismsDiffer>false</organismsDiffer>
    <experiments>3</experiments>
</comment>
<comment type="interaction">
    <interactant intactId="EBI-10961706">
        <id>Q96ED9-2</id>
    </interactant>
    <interactant intactId="EBI-2798416">
        <id>Q99633</id>
        <label>PRPF18</label>
    </interactant>
    <organismsDiffer>false</organismsDiffer>
    <experiments>3</experiments>
</comment>
<comment type="interaction">
    <interactant intactId="EBI-10961706">
        <id>Q96ED9-2</id>
    </interactant>
    <interactant intactId="EBI-1567797">
        <id>Q8WWY3</id>
        <label>PRPF31</label>
    </interactant>
    <organismsDiffer>false</organismsDiffer>
    <experiments>3</experiments>
</comment>
<comment type="interaction">
    <interactant intactId="EBI-10961706">
        <id>Q96ED9-2</id>
    </interactant>
    <interactant intactId="EBI-11986293">
        <id>P0CG20</id>
        <label>PRR35</label>
    </interactant>
    <organismsDiffer>false</organismsDiffer>
    <experiments>3</experiments>
</comment>
<comment type="interaction">
    <interactant intactId="EBI-10961706">
        <id>Q96ED9-2</id>
    </interactant>
    <interactant intactId="EBI-359352">
        <id>P25786</id>
        <label>PSMA1</label>
    </interactant>
    <organismsDiffer>false</organismsDiffer>
    <experiments>3</experiments>
</comment>
<comment type="interaction">
    <interactant intactId="EBI-10961706">
        <id>Q96ED9-2</id>
    </interactant>
    <interactant intactId="EBI-14093916">
        <id>Q9UJ41-4</id>
        <label>RABGEF1</label>
    </interactant>
    <organismsDiffer>false</organismsDiffer>
    <experiments>3</experiments>
</comment>
<comment type="interaction">
    <interactant intactId="EBI-10961706">
        <id>Q96ED9-2</id>
    </interactant>
    <interactant intactId="EBI-749285">
        <id>Q15311</id>
        <label>RALBP1</label>
    </interactant>
    <organismsDiffer>false</organismsDiffer>
    <experiments>3</experiments>
</comment>
<comment type="interaction">
    <interactant intactId="EBI-10961706">
        <id>Q96ED9-2</id>
    </interactant>
    <interactant intactId="EBI-740773">
        <id>Q96IZ5</id>
        <label>RBM41</label>
    </interactant>
    <organismsDiffer>false</organismsDiffer>
    <experiments>3</experiments>
</comment>
<comment type="interaction">
    <interactant intactId="EBI-10961706">
        <id>Q96ED9-2</id>
    </interactant>
    <interactant intactId="EBI-1504830">
        <id>Q9P2K3-2</id>
        <label>RCOR3</label>
    </interactant>
    <organismsDiffer>false</organismsDiffer>
    <experiments>3</experiments>
</comment>
<comment type="interaction">
    <interactant intactId="EBI-10961706">
        <id>Q96ED9-2</id>
    </interactant>
    <interactant intactId="EBI-12058229">
        <id>P57771-2</id>
        <label>RGS8</label>
    </interactant>
    <organismsDiffer>false</organismsDiffer>
    <experiments>3</experiments>
</comment>
<comment type="interaction">
    <interactant intactId="EBI-10961706">
        <id>Q96ED9-2</id>
    </interactant>
    <interactant intactId="EBI-6380946">
        <id>Q8NCN4</id>
        <label>RNF169</label>
    </interactant>
    <organismsDiffer>false</organismsDiffer>
    <experiments>3</experiments>
</comment>
<comment type="interaction">
    <interactant intactId="EBI-10961706">
        <id>Q96ED9-2</id>
    </interactant>
    <interactant intactId="EBI-16428950">
        <id>A0A0S2Z4G9</id>
        <label>RNF6</label>
    </interactant>
    <organismsDiffer>false</organismsDiffer>
    <experiments>3</experiments>
</comment>
<comment type="interaction">
    <interactant intactId="EBI-10961706">
        <id>Q96ED9-2</id>
    </interactant>
    <interactant intactId="EBI-748391">
        <id>Q9BWG6</id>
        <label>SCNM1</label>
    </interactant>
    <organismsDiffer>false</organismsDiffer>
    <experiments>3</experiments>
</comment>
<comment type="interaction">
    <interactant intactId="EBI-10961706">
        <id>Q96ED9-2</id>
    </interactant>
    <interactant intactId="EBI-747035">
        <id>Q9H788</id>
        <label>SH2D4A</label>
    </interactant>
    <organismsDiffer>false</organismsDiffer>
    <experiments>3</experiments>
</comment>
<comment type="interaction">
    <interactant intactId="EBI-10961706">
        <id>Q96ED9-2</id>
    </interactant>
    <interactant intactId="EBI-632715">
        <id>Q13573</id>
        <label>SNW1</label>
    </interactant>
    <organismsDiffer>false</organismsDiffer>
    <experiments>3</experiments>
</comment>
<comment type="interaction">
    <interactant intactId="EBI-10961706">
        <id>Q96ED9-2</id>
    </interactant>
    <interactant intactId="EBI-11995806">
        <id>Q9H0A9-2</id>
        <label>SPATC1L</label>
    </interactant>
    <organismsDiffer>false</organismsDiffer>
    <experiments>3</experiments>
</comment>
<comment type="interaction">
    <interactant intactId="EBI-10961706">
        <id>Q96ED9-2</id>
    </interactant>
    <interactant intactId="EBI-349968">
        <id>O43463</id>
        <label>SUV39H1</label>
    </interactant>
    <organismsDiffer>false</organismsDiffer>
    <experiments>3</experiments>
</comment>
<comment type="interaction">
    <interactant intactId="EBI-10961706">
        <id>Q96ED9-2</id>
    </interactant>
    <interactant intactId="EBI-745392">
        <id>Q9BSW7</id>
        <label>SYT17</label>
    </interactant>
    <organismsDiffer>false</organismsDiffer>
    <experiments>3</experiments>
</comment>
<comment type="interaction">
    <interactant intactId="EBI-10961706">
        <id>Q96ED9-2</id>
    </interactant>
    <interactant intactId="EBI-10246152">
        <id>Q5T7P8-2</id>
        <label>SYT6</label>
    </interactant>
    <organismsDiffer>false</organismsDiffer>
    <experiments>3</experiments>
</comment>
<comment type="interaction">
    <interactant intactId="EBI-10961706">
        <id>Q96ED9-2</id>
    </interactant>
    <interactant intactId="EBI-8787464">
        <id>Q9NU19</id>
        <label>TBC1D22B</label>
    </interactant>
    <organismsDiffer>false</organismsDiffer>
    <experiments>3</experiments>
</comment>
<comment type="interaction">
    <interactant intactId="EBI-10961706">
        <id>Q96ED9-2</id>
    </interactant>
    <interactant intactId="EBI-17455779">
        <id>Q9Y2I9-2</id>
        <label>TBC1D30</label>
    </interactant>
    <organismsDiffer>false</organismsDiffer>
    <experiments>3</experiments>
</comment>
<comment type="interaction">
    <interactant intactId="EBI-10961706">
        <id>Q96ED9-2</id>
    </interactant>
    <interactant intactId="EBI-11955057">
        <id>Q8N8B7-2</id>
        <label>TCEANC</label>
    </interactant>
    <organismsDiffer>false</organismsDiffer>
    <experiments>3</experiments>
</comment>
<comment type="interaction">
    <interactant intactId="EBI-10961706">
        <id>Q96ED9-2</id>
    </interactant>
    <interactant intactId="EBI-740781">
        <id>Q9BT92</id>
        <label>TCHP</label>
    </interactant>
    <organismsDiffer>false</organismsDiffer>
    <experiments>3</experiments>
</comment>
<comment type="interaction">
    <interactant intactId="EBI-10961706">
        <id>Q96ED9-2</id>
    </interactant>
    <interactant intactId="EBI-744794">
        <id>Q9BZW7</id>
        <label>TSGA10</label>
    </interactant>
    <organismsDiffer>false</organismsDiffer>
    <experiments>3</experiments>
</comment>
<comment type="interaction">
    <interactant intactId="EBI-10961706">
        <id>Q96ED9-2</id>
    </interactant>
    <interactant intactId="EBI-10241197">
        <id>Q3SY00</id>
        <label>TSGA10IP</label>
    </interactant>
    <organismsDiffer>false</organismsDiffer>
    <experiments>3</experiments>
</comment>
<comment type="interaction">
    <interactant intactId="EBI-10961706">
        <id>Q96ED9-2</id>
    </interactant>
    <interactant intactId="EBI-9090990">
        <id>Q5W5X9-3</id>
        <label>TTC23</label>
    </interactant>
    <organismsDiffer>false</organismsDiffer>
    <experiments>3</experiments>
</comment>
<comment type="interaction">
    <interactant intactId="EBI-10961706">
        <id>Q96ED9-2</id>
    </interactant>
    <interactant intactId="EBI-743272">
        <id>O75604</id>
        <label>USP2</label>
    </interactant>
    <organismsDiffer>false</organismsDiffer>
    <experiments>3</experiments>
</comment>
<comment type="interaction">
    <interactant intactId="EBI-10961706">
        <id>Q96ED9-2</id>
    </interactant>
    <interactant intactId="EBI-11737646">
        <id>Q5TAP6</id>
        <label>UTP14C</label>
    </interactant>
    <organismsDiffer>false</organismsDiffer>
    <experiments>3</experiments>
</comment>
<comment type="interaction">
    <interactant intactId="EBI-10961706">
        <id>Q96ED9-2</id>
    </interactant>
    <interactant intactId="EBI-7781767">
        <id>Q9UFB7</id>
        <label>ZBTB47</label>
    </interactant>
    <organismsDiffer>false</organismsDiffer>
    <experiments>3</experiments>
</comment>
<comment type="interaction">
    <interactant intactId="EBI-10961706">
        <id>Q96ED9-2</id>
    </interactant>
    <interactant intactId="EBI-14104088">
        <id>Q53FD0-2</id>
        <label>ZC2HC1C</label>
    </interactant>
    <organismsDiffer>false</organismsDiffer>
    <experiments>3</experiments>
</comment>
<comment type="interaction">
    <interactant intactId="EBI-10961706">
        <id>Q96ED9-2</id>
    </interactant>
    <interactant intactId="EBI-2555749">
        <id>Q6P2D0</id>
        <label>ZFP1</label>
    </interactant>
    <organismsDiffer>false</organismsDiffer>
    <experiments>3</experiments>
</comment>
<comment type="interaction">
    <interactant intactId="EBI-10961706">
        <id>Q96ED9-2</id>
    </interactant>
    <interactant intactId="EBI-8656416">
        <id>Q68DK2-5</id>
        <label>ZFYVE26</label>
    </interactant>
    <organismsDiffer>false</organismsDiffer>
    <experiments>3</experiments>
</comment>
<comment type="interaction">
    <interactant intactId="EBI-10961706">
        <id>Q96ED9-2</id>
    </interactant>
    <interactant intactId="EBI-10183064">
        <id>Q8N5A5-2</id>
        <label>ZGPAT</label>
    </interactant>
    <organismsDiffer>false</organismsDiffer>
    <experiments>3</experiments>
</comment>
<comment type="interaction">
    <interactant intactId="EBI-10961706">
        <id>Q96ED9-2</id>
    </interactant>
    <interactant intactId="EBI-7234993">
        <id>Q9UII5</id>
        <label>ZNF107</label>
    </interactant>
    <organismsDiffer>false</organismsDiffer>
    <experiments>3</experiments>
</comment>
<comment type="interaction">
    <interactant intactId="EBI-10961706">
        <id>Q96ED9-2</id>
    </interactant>
    <interactant intactId="EBI-10177272">
        <id>P15622-3</id>
        <label>ZNF250</label>
    </interactant>
    <organismsDiffer>false</organismsDiffer>
    <experiments>3</experiments>
</comment>
<comment type="interaction">
    <interactant intactId="EBI-10961706">
        <id>Q96ED9-2</id>
    </interactant>
    <interactant intactId="EBI-11041653">
        <id>P13682</id>
        <label>ZNF35</label>
    </interactant>
    <organismsDiffer>false</organismsDiffer>
    <experiments>3</experiments>
</comment>
<comment type="interaction">
    <interactant intactId="EBI-10961706">
        <id>Q96ED9-2</id>
    </interactant>
    <interactant intactId="EBI-740727">
        <id>Q8TAU3</id>
        <label>ZNF417</label>
    </interactant>
    <organismsDiffer>false</organismsDiffer>
    <experiments>3</experiments>
</comment>
<comment type="interaction">
    <interactant intactId="EBI-10961706">
        <id>Q96ED9-2</id>
    </interactant>
    <interactant intactId="EBI-12006434">
        <id>Q96MX3</id>
        <label>ZNF48</label>
    </interactant>
    <organismsDiffer>false</organismsDiffer>
    <experiments>3</experiments>
</comment>
<comment type="interaction">
    <interactant intactId="EBI-10961706">
        <id>Q96ED9-2</id>
    </interactant>
    <interactant intactId="EBI-10486136">
        <id>Q6ZNH5</id>
        <label>ZNF497</label>
    </interactant>
    <organismsDiffer>false</organismsDiffer>
    <experiments>3</experiments>
</comment>
<comment type="interaction">
    <interactant intactId="EBI-10961706">
        <id>Q96ED9-2</id>
    </interactant>
    <interactant intactId="EBI-10172590">
        <id>Q7Z3I7</id>
        <label>ZNF572</label>
    </interactant>
    <organismsDiffer>false</organismsDiffer>
    <experiments>3</experiments>
</comment>
<comment type="interaction">
    <interactant intactId="EBI-10961706">
        <id>Q96ED9-2</id>
    </interactant>
    <interactant intactId="EBI-6427977">
        <id>Q96SQ5</id>
        <label>ZNF587</label>
    </interactant>
    <organismsDiffer>false</organismsDiffer>
    <experiments>3</experiments>
</comment>
<comment type="interaction">
    <interactant intactId="EBI-10961706">
        <id>Q96ED9-2</id>
    </interactant>
    <interactant intactId="EBI-11985915">
        <id>Q5T619</id>
        <label>ZNF648</label>
    </interactant>
    <organismsDiffer>false</organismsDiffer>
    <experiments>3</experiments>
</comment>
<comment type="interaction">
    <interactant intactId="EBI-10961706">
        <id>Q96ED9-2</id>
    </interactant>
    <interactant intactId="EBI-5667516">
        <id>Q9Y2P0</id>
        <label>ZNF835</label>
    </interactant>
    <organismsDiffer>false</organismsDiffer>
    <experiments>3</experiments>
</comment>
<comment type="interaction">
    <interactant intactId="EBI-10961706">
        <id>Q96ED9-2</id>
    </interactant>
    <interactant intactId="EBI-10225757">
        <id>Q08AG5</id>
        <label>ZNF844</label>
    </interactant>
    <organismsDiffer>false</organismsDiffer>
    <experiments>3</experiments>
</comment>
<comment type="subcellular location">
    <subcellularLocation>
        <location evidence="7">Cytoplasm</location>
        <location evidence="7">Cytoskeleton</location>
        <location evidence="7">Microtubule organizing center</location>
        <location evidence="7">Centrosome</location>
    </subcellularLocation>
    <subcellularLocation>
        <location evidence="11">Cytoplasm</location>
    </subcellularLocation>
    <subcellularLocation>
        <location evidence="1">Cytoplasm</location>
        <location evidence="1">Cytoskeleton</location>
    </subcellularLocation>
    <subcellularLocation>
        <location evidence="11">Golgi apparatus</location>
        <location evidence="11">trans-Golgi network</location>
    </subcellularLocation>
    <text evidence="1 8 11">Colocalizes with aggresomes, which are aggregates of misfolded proteins, at the centrosome (PubMed:17540036). Also localizes to punctate cytoplasmic foci which do not appear to overlap with early or late endosomes, the endoplasmic reticulum, multivesicular bodies (MVBs), lysosome, or mitochondria (PubMed:17540036, PubMed:32073997). Often found in close association with microtubules (PubMed:17540036). Localizes to the manchette in elongating spermatids (By similarity).</text>
</comment>
<comment type="alternative products">
    <event type="alternative splicing"/>
    <isoform>
        <id>Q96ED9-1</id>
        <name>1</name>
        <sequence type="displayed"/>
    </isoform>
    <isoform>
        <id>Q96ED9-2</id>
        <name>2</name>
        <sequence type="described" ref="VSP_009342"/>
    </isoform>
</comment>
<comment type="similarity">
    <text evidence="13">Belongs to the hook family.</text>
</comment>
<feature type="chain" id="PRO_0000219194" description="Protein Hook homolog 2">
    <location>
        <begin position="1"/>
        <end position="719"/>
    </location>
</feature>
<feature type="domain" description="Calponin-homology (CH)" evidence="3">
    <location>
        <begin position="6"/>
        <end position="122"/>
    </location>
</feature>
<feature type="region of interest" description="Sufficient for interaction with microtubules">
    <location>
        <begin position="1"/>
        <end position="548"/>
    </location>
</feature>
<feature type="region of interest" description="Required for localization to the centrosome and induction of aggresome formation">
    <location>
        <begin position="1"/>
        <end position="161"/>
    </location>
</feature>
<feature type="region of interest" description="Required for localization to the centrosome and induction of aggresome formation">
    <location>
        <begin position="533"/>
        <end position="719"/>
    </location>
</feature>
<feature type="region of interest" description="Sufficient for interaction with CNTRL" evidence="7">
    <location>
        <begin position="584"/>
        <end position="719"/>
    </location>
</feature>
<feature type="region of interest" description="Disordered" evidence="4">
    <location>
        <begin position="696"/>
        <end position="719"/>
    </location>
</feature>
<feature type="coiled-coil region" evidence="2">
    <location>
        <begin position="180"/>
        <end position="427"/>
    </location>
</feature>
<feature type="coiled-coil region" evidence="2">
    <location>
        <begin position="455"/>
        <end position="607"/>
    </location>
</feature>
<feature type="modified residue" description="Phosphoserine" evidence="14">
    <location>
        <position position="163"/>
    </location>
</feature>
<feature type="modified residue" description="Phosphothreonine" evidence="15">
    <location>
        <position position="230"/>
    </location>
</feature>
<feature type="modified residue" description="Phosphoserine" evidence="16">
    <location>
        <position position="710"/>
    </location>
</feature>
<feature type="splice variant" id="VSP_009342" description="In isoform 2." evidence="12">
    <location>
        <begin position="534"/>
        <end position="535"/>
    </location>
</feature>
<feature type="sequence variant" id="VAR_017575" description="In dbSNP:rs2305376.">
    <original>G</original>
    <variation>R</variation>
    <location>
        <position position="10"/>
    </location>
</feature>
<feature type="sequence variant" id="VAR_017576" description="In dbSNP:rs897804." evidence="6">
    <original>H</original>
    <variation>Q</variation>
    <location>
        <position position="488"/>
    </location>
</feature>
<feature type="sequence conflict" description="In Ref. 1; AAC09299." evidence="13" ref="1">
    <original>R</original>
    <variation>L</variation>
    <location>
        <position position="376"/>
    </location>
</feature>
<name>HOOK2_HUMAN</name>
<evidence type="ECO:0000250" key="1">
    <source>
        <dbReference type="UniProtKB" id="Q7TMK6"/>
    </source>
</evidence>
<evidence type="ECO:0000255" key="2"/>
<evidence type="ECO:0000255" key="3">
    <source>
        <dbReference type="PROSITE-ProRule" id="PRU00044"/>
    </source>
</evidence>
<evidence type="ECO:0000256" key="4">
    <source>
        <dbReference type="SAM" id="MobiDB-lite"/>
    </source>
</evidence>
<evidence type="ECO:0000269" key="5">
    <source>
    </source>
</evidence>
<evidence type="ECO:0000269" key="6">
    <source>
    </source>
</evidence>
<evidence type="ECO:0000269" key="7">
    <source>
    </source>
</evidence>
<evidence type="ECO:0000269" key="8">
    <source>
    </source>
</evidence>
<evidence type="ECO:0000269" key="9">
    <source>
    </source>
</evidence>
<evidence type="ECO:0000269" key="10">
    <source>
    </source>
</evidence>
<evidence type="ECO:0000269" key="11">
    <source>
    </source>
</evidence>
<evidence type="ECO:0000303" key="12">
    <source>
    </source>
</evidence>
<evidence type="ECO:0000305" key="13"/>
<evidence type="ECO:0007744" key="14">
    <source>
    </source>
</evidence>
<evidence type="ECO:0007744" key="15">
    <source>
    </source>
</evidence>
<evidence type="ECO:0007744" key="16">
    <source>
    </source>
</evidence>
<proteinExistence type="evidence at protein level"/>